<reference key="1">
    <citation type="submission" date="1997-08" db="EMBL/GenBank/DDBJ databases">
        <title>The dnaK and dnaJ chaperone genes of Pasteurella haemolytica A1.</title>
        <authorList>
            <person name="Al S.L."/>
            <person name="Lo R.Y.C."/>
        </authorList>
    </citation>
    <scope>NUCLEOTIDE SEQUENCE [GENOMIC DNA]</scope>
    <source>
        <strain>Serotype A1</strain>
    </source>
</reference>
<protein>
    <recommendedName>
        <fullName evidence="1">Chaperone protein DnaJ</fullName>
    </recommendedName>
</protein>
<evidence type="ECO:0000255" key="1">
    <source>
        <dbReference type="HAMAP-Rule" id="MF_01152"/>
    </source>
</evidence>
<accession>O52065</accession>
<gene>
    <name evidence="1" type="primary">dnaJ</name>
</gene>
<organism>
    <name type="scientific">Mannheimia haemolytica</name>
    <name type="common">Pasteurella haemolytica</name>
    <dbReference type="NCBI Taxonomy" id="75985"/>
    <lineage>
        <taxon>Bacteria</taxon>
        <taxon>Pseudomonadati</taxon>
        <taxon>Pseudomonadota</taxon>
        <taxon>Gammaproteobacteria</taxon>
        <taxon>Pasteurellales</taxon>
        <taxon>Pasteurellaceae</taxon>
        <taxon>Mannheimia</taxon>
    </lineage>
</organism>
<name>DNAJ_MANHA</name>
<sequence>MAKKDYYEVLGLSKGASEKDIKRAYKRLAAKHHPDKNQGSKESEEKFKEITEAYDVLTDSEKKAMYDQYGHAAFEQGGAGAGGFGGFGGGGFGGFEDIFSEMFGGGFGGGGRRQRVVRGDDLRYDIEITLEEAVKGCKKDIRIHTLAECDTCHGTGAEAGSKVETCSHCHGSGRIRRQQGFFVTDAVCPSCHGTGKRIEKPCRSCHGDGRVHKAKNLSVTIPAGVDTGNQLRLSREGAAGENGAPAGDLYVVIPVKEHDIFERDGSNLYCEVPIIFTLAALGGEIEMPTLDGQLKLKFRQKLQPVNYSVLRGKGVTSPRGGYAGDLICKVVVETPVNLTEEQKALLRQFEESLEGQGKHRPKHEGFFDGVKKFFDNLGK</sequence>
<feature type="chain" id="PRO_0000070847" description="Chaperone protein DnaJ">
    <location>
        <begin position="1"/>
        <end position="379"/>
    </location>
</feature>
<feature type="domain" description="J" evidence="1">
    <location>
        <begin position="5"/>
        <end position="70"/>
    </location>
</feature>
<feature type="repeat" description="CXXCXGXG motif">
    <location>
        <begin position="149"/>
        <end position="156"/>
    </location>
</feature>
<feature type="repeat" description="CXXCXGXG motif">
    <location>
        <begin position="166"/>
        <end position="173"/>
    </location>
</feature>
<feature type="repeat" description="CXXCXGXG motif">
    <location>
        <begin position="188"/>
        <end position="195"/>
    </location>
</feature>
<feature type="repeat" description="CXXCXGXG motif">
    <location>
        <begin position="202"/>
        <end position="209"/>
    </location>
</feature>
<feature type="zinc finger region" description="CR-type" evidence="1">
    <location>
        <begin position="136"/>
        <end position="214"/>
    </location>
</feature>
<feature type="binding site" evidence="1">
    <location>
        <position position="149"/>
    </location>
    <ligand>
        <name>Zn(2+)</name>
        <dbReference type="ChEBI" id="CHEBI:29105"/>
        <label>1</label>
    </ligand>
</feature>
<feature type="binding site" evidence="1">
    <location>
        <position position="152"/>
    </location>
    <ligand>
        <name>Zn(2+)</name>
        <dbReference type="ChEBI" id="CHEBI:29105"/>
        <label>1</label>
    </ligand>
</feature>
<feature type="binding site" evidence="1">
    <location>
        <position position="166"/>
    </location>
    <ligand>
        <name>Zn(2+)</name>
        <dbReference type="ChEBI" id="CHEBI:29105"/>
        <label>2</label>
    </ligand>
</feature>
<feature type="binding site" evidence="1">
    <location>
        <position position="169"/>
    </location>
    <ligand>
        <name>Zn(2+)</name>
        <dbReference type="ChEBI" id="CHEBI:29105"/>
        <label>2</label>
    </ligand>
</feature>
<feature type="binding site" evidence="1">
    <location>
        <position position="188"/>
    </location>
    <ligand>
        <name>Zn(2+)</name>
        <dbReference type="ChEBI" id="CHEBI:29105"/>
        <label>2</label>
    </ligand>
</feature>
<feature type="binding site" evidence="1">
    <location>
        <position position="191"/>
    </location>
    <ligand>
        <name>Zn(2+)</name>
        <dbReference type="ChEBI" id="CHEBI:29105"/>
        <label>2</label>
    </ligand>
</feature>
<feature type="binding site" evidence="1">
    <location>
        <position position="202"/>
    </location>
    <ligand>
        <name>Zn(2+)</name>
        <dbReference type="ChEBI" id="CHEBI:29105"/>
        <label>1</label>
    </ligand>
</feature>
<feature type="binding site" evidence="1">
    <location>
        <position position="205"/>
    </location>
    <ligand>
        <name>Zn(2+)</name>
        <dbReference type="ChEBI" id="CHEBI:29105"/>
        <label>1</label>
    </ligand>
</feature>
<keyword id="KW-0143">Chaperone</keyword>
<keyword id="KW-0963">Cytoplasm</keyword>
<keyword id="KW-0235">DNA replication</keyword>
<keyword id="KW-0479">Metal-binding</keyword>
<keyword id="KW-0677">Repeat</keyword>
<keyword id="KW-0346">Stress response</keyword>
<keyword id="KW-0862">Zinc</keyword>
<keyword id="KW-0863">Zinc-finger</keyword>
<dbReference type="EMBL" id="AF017730">
    <property type="protein sequence ID" value="AAB94555.1"/>
    <property type="molecule type" value="Genomic_DNA"/>
</dbReference>
<dbReference type="SMR" id="O52065"/>
<dbReference type="STRING" id="75985.WC39_01740"/>
<dbReference type="GO" id="GO:0005737">
    <property type="term" value="C:cytoplasm"/>
    <property type="evidence" value="ECO:0007669"/>
    <property type="project" value="UniProtKB-SubCell"/>
</dbReference>
<dbReference type="GO" id="GO:0005524">
    <property type="term" value="F:ATP binding"/>
    <property type="evidence" value="ECO:0007669"/>
    <property type="project" value="InterPro"/>
</dbReference>
<dbReference type="GO" id="GO:0031072">
    <property type="term" value="F:heat shock protein binding"/>
    <property type="evidence" value="ECO:0007669"/>
    <property type="project" value="InterPro"/>
</dbReference>
<dbReference type="GO" id="GO:0051082">
    <property type="term" value="F:unfolded protein binding"/>
    <property type="evidence" value="ECO:0007669"/>
    <property type="project" value="UniProtKB-UniRule"/>
</dbReference>
<dbReference type="GO" id="GO:0008270">
    <property type="term" value="F:zinc ion binding"/>
    <property type="evidence" value="ECO:0007669"/>
    <property type="project" value="UniProtKB-UniRule"/>
</dbReference>
<dbReference type="GO" id="GO:0051085">
    <property type="term" value="P:chaperone cofactor-dependent protein refolding"/>
    <property type="evidence" value="ECO:0007669"/>
    <property type="project" value="TreeGrafter"/>
</dbReference>
<dbReference type="GO" id="GO:0006260">
    <property type="term" value="P:DNA replication"/>
    <property type="evidence" value="ECO:0007669"/>
    <property type="project" value="UniProtKB-KW"/>
</dbReference>
<dbReference type="GO" id="GO:0042026">
    <property type="term" value="P:protein refolding"/>
    <property type="evidence" value="ECO:0007669"/>
    <property type="project" value="TreeGrafter"/>
</dbReference>
<dbReference type="GO" id="GO:0009408">
    <property type="term" value="P:response to heat"/>
    <property type="evidence" value="ECO:0007669"/>
    <property type="project" value="InterPro"/>
</dbReference>
<dbReference type="CDD" id="cd06257">
    <property type="entry name" value="DnaJ"/>
    <property type="match status" value="1"/>
</dbReference>
<dbReference type="CDD" id="cd10747">
    <property type="entry name" value="DnaJ_C"/>
    <property type="match status" value="1"/>
</dbReference>
<dbReference type="CDD" id="cd10719">
    <property type="entry name" value="DnaJ_zf"/>
    <property type="match status" value="1"/>
</dbReference>
<dbReference type="FunFam" id="1.10.287.110:FF:000034">
    <property type="entry name" value="Chaperone protein DnaJ"/>
    <property type="match status" value="1"/>
</dbReference>
<dbReference type="FunFam" id="2.10.230.10:FF:000002">
    <property type="entry name" value="Molecular chaperone DnaJ"/>
    <property type="match status" value="1"/>
</dbReference>
<dbReference type="FunFam" id="2.60.260.20:FF:000004">
    <property type="entry name" value="Molecular chaperone DnaJ"/>
    <property type="match status" value="1"/>
</dbReference>
<dbReference type="Gene3D" id="1.10.287.110">
    <property type="entry name" value="DnaJ domain"/>
    <property type="match status" value="1"/>
</dbReference>
<dbReference type="Gene3D" id="2.10.230.10">
    <property type="entry name" value="Heat shock protein DnaJ, cysteine-rich domain"/>
    <property type="match status" value="1"/>
</dbReference>
<dbReference type="Gene3D" id="2.60.260.20">
    <property type="entry name" value="Urease metallochaperone UreE, N-terminal domain"/>
    <property type="match status" value="2"/>
</dbReference>
<dbReference type="HAMAP" id="MF_01152">
    <property type="entry name" value="DnaJ"/>
    <property type="match status" value="1"/>
</dbReference>
<dbReference type="InterPro" id="IPR012724">
    <property type="entry name" value="DnaJ"/>
</dbReference>
<dbReference type="InterPro" id="IPR002939">
    <property type="entry name" value="DnaJ_C"/>
</dbReference>
<dbReference type="InterPro" id="IPR001623">
    <property type="entry name" value="DnaJ_domain"/>
</dbReference>
<dbReference type="InterPro" id="IPR018253">
    <property type="entry name" value="DnaJ_domain_CS"/>
</dbReference>
<dbReference type="InterPro" id="IPR008971">
    <property type="entry name" value="HSP40/DnaJ_pept-bd"/>
</dbReference>
<dbReference type="InterPro" id="IPR001305">
    <property type="entry name" value="HSP_DnaJ_Cys-rich_dom"/>
</dbReference>
<dbReference type="InterPro" id="IPR036410">
    <property type="entry name" value="HSP_DnaJ_Cys-rich_dom_sf"/>
</dbReference>
<dbReference type="InterPro" id="IPR036869">
    <property type="entry name" value="J_dom_sf"/>
</dbReference>
<dbReference type="NCBIfam" id="TIGR02349">
    <property type="entry name" value="DnaJ_bact"/>
    <property type="match status" value="1"/>
</dbReference>
<dbReference type="NCBIfam" id="NF008035">
    <property type="entry name" value="PRK10767.1"/>
    <property type="match status" value="1"/>
</dbReference>
<dbReference type="PANTHER" id="PTHR43096:SF48">
    <property type="entry name" value="CHAPERONE PROTEIN DNAJ"/>
    <property type="match status" value="1"/>
</dbReference>
<dbReference type="PANTHER" id="PTHR43096">
    <property type="entry name" value="DNAJ HOMOLOG 1, MITOCHONDRIAL-RELATED"/>
    <property type="match status" value="1"/>
</dbReference>
<dbReference type="Pfam" id="PF00226">
    <property type="entry name" value="DnaJ"/>
    <property type="match status" value="1"/>
</dbReference>
<dbReference type="Pfam" id="PF01556">
    <property type="entry name" value="DnaJ_C"/>
    <property type="match status" value="1"/>
</dbReference>
<dbReference type="Pfam" id="PF00684">
    <property type="entry name" value="DnaJ_CXXCXGXG"/>
    <property type="match status" value="1"/>
</dbReference>
<dbReference type="PRINTS" id="PR00625">
    <property type="entry name" value="JDOMAIN"/>
</dbReference>
<dbReference type="SMART" id="SM00271">
    <property type="entry name" value="DnaJ"/>
    <property type="match status" value="1"/>
</dbReference>
<dbReference type="SUPFAM" id="SSF46565">
    <property type="entry name" value="Chaperone J-domain"/>
    <property type="match status" value="1"/>
</dbReference>
<dbReference type="SUPFAM" id="SSF57938">
    <property type="entry name" value="DnaJ/Hsp40 cysteine-rich domain"/>
    <property type="match status" value="1"/>
</dbReference>
<dbReference type="SUPFAM" id="SSF49493">
    <property type="entry name" value="HSP40/DnaJ peptide-binding domain"/>
    <property type="match status" value="2"/>
</dbReference>
<dbReference type="PROSITE" id="PS00636">
    <property type="entry name" value="DNAJ_1"/>
    <property type="match status" value="1"/>
</dbReference>
<dbReference type="PROSITE" id="PS50076">
    <property type="entry name" value="DNAJ_2"/>
    <property type="match status" value="1"/>
</dbReference>
<dbReference type="PROSITE" id="PS51188">
    <property type="entry name" value="ZF_CR"/>
    <property type="match status" value="1"/>
</dbReference>
<proteinExistence type="inferred from homology"/>
<comment type="function">
    <text evidence="1">Participates actively in the response to hyperosmotic and heat shock by preventing the aggregation of stress-denatured proteins and by disaggregating proteins, also in an autonomous, DnaK-independent fashion. Unfolded proteins bind initially to DnaJ; upon interaction with the DnaJ-bound protein, DnaK hydrolyzes its bound ATP, resulting in the formation of a stable complex. GrpE releases ADP from DnaK; ATP binding to DnaK triggers the release of the substrate protein, thus completing the reaction cycle. Several rounds of ATP-dependent interactions between DnaJ, DnaK and GrpE are required for fully efficient folding. Also involved, together with DnaK and GrpE, in the DNA replication of plasmids through activation of initiation proteins.</text>
</comment>
<comment type="cofactor">
    <cofactor evidence="1">
        <name>Zn(2+)</name>
        <dbReference type="ChEBI" id="CHEBI:29105"/>
    </cofactor>
    <text evidence="1">Binds 2 Zn(2+) ions per monomer.</text>
</comment>
<comment type="subunit">
    <text evidence="1">Homodimer.</text>
</comment>
<comment type="subcellular location">
    <subcellularLocation>
        <location evidence="1">Cytoplasm</location>
    </subcellularLocation>
</comment>
<comment type="domain">
    <text evidence="1">The J domain is necessary and sufficient to stimulate DnaK ATPase activity. Zinc center 1 plays an important role in the autonomous, DnaK-independent chaperone activity of DnaJ. Zinc center 2 is essential for interaction with DnaK and for DnaJ activity.</text>
</comment>
<comment type="similarity">
    <text evidence="1">Belongs to the DnaJ family.</text>
</comment>